<evidence type="ECO:0000250" key="1">
    <source>
        <dbReference type="UniProtKB" id="A8JB22"/>
    </source>
</evidence>
<evidence type="ECO:0000250" key="2">
    <source>
        <dbReference type="UniProtKB" id="Q8IXS2"/>
    </source>
</evidence>
<evidence type="ECO:0000255" key="3"/>
<evidence type="ECO:0000303" key="4">
    <source>
    </source>
</evidence>
<evidence type="ECO:0000305" key="5"/>
<proteinExistence type="evidence at protein level"/>
<reference key="1">
    <citation type="submission" date="2001-12" db="EMBL/GenBank/DDBJ databases">
        <title>A new mouse nucleoprotein mNYD-SP28: similar to NYD-SP28.</title>
        <authorList>
            <person name="Li J.M."/>
            <person name="Sha J.H."/>
        </authorList>
    </citation>
    <scope>NUCLEOTIDE SEQUENCE [MRNA] (ISOFORM 1)</scope>
    <source>
        <strain>ICR</strain>
        <tissue>Brain</tissue>
        <tissue>Testis</tissue>
    </source>
</reference>
<reference key="2">
    <citation type="journal article" date="2005" name="Science">
        <title>The transcriptional landscape of the mammalian genome.</title>
        <authorList>
            <person name="Carninci P."/>
            <person name="Kasukawa T."/>
            <person name="Katayama S."/>
            <person name="Gough J."/>
            <person name="Frith M.C."/>
            <person name="Maeda N."/>
            <person name="Oyama R."/>
            <person name="Ravasi T."/>
            <person name="Lenhard B."/>
            <person name="Wells C."/>
            <person name="Kodzius R."/>
            <person name="Shimokawa K."/>
            <person name="Bajic V.B."/>
            <person name="Brenner S.E."/>
            <person name="Batalov S."/>
            <person name="Forrest A.R."/>
            <person name="Zavolan M."/>
            <person name="Davis M.J."/>
            <person name="Wilming L.G."/>
            <person name="Aidinis V."/>
            <person name="Allen J.E."/>
            <person name="Ambesi-Impiombato A."/>
            <person name="Apweiler R."/>
            <person name="Aturaliya R.N."/>
            <person name="Bailey T.L."/>
            <person name="Bansal M."/>
            <person name="Baxter L."/>
            <person name="Beisel K.W."/>
            <person name="Bersano T."/>
            <person name="Bono H."/>
            <person name="Chalk A.M."/>
            <person name="Chiu K.P."/>
            <person name="Choudhary V."/>
            <person name="Christoffels A."/>
            <person name="Clutterbuck D.R."/>
            <person name="Crowe M.L."/>
            <person name="Dalla E."/>
            <person name="Dalrymple B.P."/>
            <person name="de Bono B."/>
            <person name="Della Gatta G."/>
            <person name="di Bernardo D."/>
            <person name="Down T."/>
            <person name="Engstrom P."/>
            <person name="Fagiolini M."/>
            <person name="Faulkner G."/>
            <person name="Fletcher C.F."/>
            <person name="Fukushima T."/>
            <person name="Furuno M."/>
            <person name="Futaki S."/>
            <person name="Gariboldi M."/>
            <person name="Georgii-Hemming P."/>
            <person name="Gingeras T.R."/>
            <person name="Gojobori T."/>
            <person name="Green R.E."/>
            <person name="Gustincich S."/>
            <person name="Harbers M."/>
            <person name="Hayashi Y."/>
            <person name="Hensch T.K."/>
            <person name="Hirokawa N."/>
            <person name="Hill D."/>
            <person name="Huminiecki L."/>
            <person name="Iacono M."/>
            <person name="Ikeo K."/>
            <person name="Iwama A."/>
            <person name="Ishikawa T."/>
            <person name="Jakt M."/>
            <person name="Kanapin A."/>
            <person name="Katoh M."/>
            <person name="Kawasawa Y."/>
            <person name="Kelso J."/>
            <person name="Kitamura H."/>
            <person name="Kitano H."/>
            <person name="Kollias G."/>
            <person name="Krishnan S.P."/>
            <person name="Kruger A."/>
            <person name="Kummerfeld S.K."/>
            <person name="Kurochkin I.V."/>
            <person name="Lareau L.F."/>
            <person name="Lazarevic D."/>
            <person name="Lipovich L."/>
            <person name="Liu J."/>
            <person name="Liuni S."/>
            <person name="McWilliam S."/>
            <person name="Madan Babu M."/>
            <person name="Madera M."/>
            <person name="Marchionni L."/>
            <person name="Matsuda H."/>
            <person name="Matsuzawa S."/>
            <person name="Miki H."/>
            <person name="Mignone F."/>
            <person name="Miyake S."/>
            <person name="Morris K."/>
            <person name="Mottagui-Tabar S."/>
            <person name="Mulder N."/>
            <person name="Nakano N."/>
            <person name="Nakauchi H."/>
            <person name="Ng P."/>
            <person name="Nilsson R."/>
            <person name="Nishiguchi S."/>
            <person name="Nishikawa S."/>
            <person name="Nori F."/>
            <person name="Ohara O."/>
            <person name="Okazaki Y."/>
            <person name="Orlando V."/>
            <person name="Pang K.C."/>
            <person name="Pavan W.J."/>
            <person name="Pavesi G."/>
            <person name="Pesole G."/>
            <person name="Petrovsky N."/>
            <person name="Piazza S."/>
            <person name="Reed J."/>
            <person name="Reid J.F."/>
            <person name="Ring B.Z."/>
            <person name="Ringwald M."/>
            <person name="Rost B."/>
            <person name="Ruan Y."/>
            <person name="Salzberg S.L."/>
            <person name="Sandelin A."/>
            <person name="Schneider C."/>
            <person name="Schoenbach C."/>
            <person name="Sekiguchi K."/>
            <person name="Semple C.A."/>
            <person name="Seno S."/>
            <person name="Sessa L."/>
            <person name="Sheng Y."/>
            <person name="Shibata Y."/>
            <person name="Shimada H."/>
            <person name="Shimada K."/>
            <person name="Silva D."/>
            <person name="Sinclair B."/>
            <person name="Sperling S."/>
            <person name="Stupka E."/>
            <person name="Sugiura K."/>
            <person name="Sultana R."/>
            <person name="Takenaka Y."/>
            <person name="Taki K."/>
            <person name="Tammoja K."/>
            <person name="Tan S.L."/>
            <person name="Tang S."/>
            <person name="Taylor M.S."/>
            <person name="Tegner J."/>
            <person name="Teichmann S.A."/>
            <person name="Ueda H.R."/>
            <person name="van Nimwegen E."/>
            <person name="Verardo R."/>
            <person name="Wei C.L."/>
            <person name="Yagi K."/>
            <person name="Yamanishi H."/>
            <person name="Zabarovsky E."/>
            <person name="Zhu S."/>
            <person name="Zimmer A."/>
            <person name="Hide W."/>
            <person name="Bult C."/>
            <person name="Grimmond S.M."/>
            <person name="Teasdale R.D."/>
            <person name="Liu E.T."/>
            <person name="Brusic V."/>
            <person name="Quackenbush J."/>
            <person name="Wahlestedt C."/>
            <person name="Mattick J.S."/>
            <person name="Hume D.A."/>
            <person name="Kai C."/>
            <person name="Sasaki D."/>
            <person name="Tomaru Y."/>
            <person name="Fukuda S."/>
            <person name="Kanamori-Katayama M."/>
            <person name="Suzuki M."/>
            <person name="Aoki J."/>
            <person name="Arakawa T."/>
            <person name="Iida J."/>
            <person name="Imamura K."/>
            <person name="Itoh M."/>
            <person name="Kato T."/>
            <person name="Kawaji H."/>
            <person name="Kawagashira N."/>
            <person name="Kawashima T."/>
            <person name="Kojima M."/>
            <person name="Kondo S."/>
            <person name="Konno H."/>
            <person name="Nakano K."/>
            <person name="Ninomiya N."/>
            <person name="Nishio T."/>
            <person name="Okada M."/>
            <person name="Plessy C."/>
            <person name="Shibata K."/>
            <person name="Shiraki T."/>
            <person name="Suzuki S."/>
            <person name="Tagami M."/>
            <person name="Waki K."/>
            <person name="Watahiki A."/>
            <person name="Okamura-Oho Y."/>
            <person name="Suzuki H."/>
            <person name="Kawai J."/>
            <person name="Hayashizaki Y."/>
        </authorList>
    </citation>
    <scope>NUCLEOTIDE SEQUENCE [LARGE SCALE MRNA] (ISOFORM 1)</scope>
    <source>
        <strain>C57BL/6J</strain>
        <tissue>Testis</tissue>
    </source>
</reference>
<reference key="3">
    <citation type="journal article" date="2004" name="Genome Res.">
        <title>The status, quality, and expansion of the NIH full-length cDNA project: the Mammalian Gene Collection (MGC).</title>
        <authorList>
            <consortium name="The MGC Project Team"/>
        </authorList>
    </citation>
    <scope>NUCLEOTIDE SEQUENCE [LARGE SCALE MRNA] (ISOFORMS 1 AND 2)</scope>
    <source>
        <tissue>Olfactory epithelium</tissue>
    </source>
</reference>
<reference key="4">
    <citation type="journal article" date="2010" name="Cell">
        <title>A tissue-specific atlas of mouse protein phosphorylation and expression.</title>
        <authorList>
            <person name="Huttlin E.L."/>
            <person name="Jedrychowski M.P."/>
            <person name="Elias J.E."/>
            <person name="Goswami T."/>
            <person name="Rad R."/>
            <person name="Beausoleil S.A."/>
            <person name="Villen J."/>
            <person name="Haas W."/>
            <person name="Sowa M.E."/>
            <person name="Gygi S.P."/>
        </authorList>
    </citation>
    <scope>IDENTIFICATION BY MASS SPECTROMETRY [LARGE SCALE ANALYSIS]</scope>
    <source>
        <tissue>Testis</tissue>
    </source>
</reference>
<accession>Q8VHI7</accession>
<accession>Q6PAP9</accession>
<comment type="function">
    <text evidence="1 2">Component of the nexin-dynein regulatory complex (N-DRC), a key regulator of ciliary/flagellar motility which maintains the alignment and integrity of the distal axoneme and regulates microtubule sliding in motile axonemes. Plays a critical role in the assembly of N-DRC and also stabilizes the assembly of multiple inner dynein arms and radial spokes. Coassembles with DRC1 to form a central scaffold needed for assembly of the N-DRC and its attachment to the outer doublet microtubules.</text>
</comment>
<comment type="subunit">
    <text evidence="1 2">Component of the nexin-dynein regulatory complex (N-DRC). Interacts with DRC1.</text>
</comment>
<comment type="subcellular location">
    <subcellularLocation>
        <location evidence="1">Cytoplasm</location>
        <location evidence="1">Cytoskeleton</location>
        <location evidence="1">Flagellum basal body</location>
    </subcellularLocation>
    <subcellularLocation>
        <location evidence="1">Cell projection</location>
        <location evidence="1">Cilium</location>
        <location evidence="1">Flagellum</location>
    </subcellularLocation>
    <subcellularLocation>
        <location evidence="1">Cytoplasm</location>
        <location evidence="1">Cytoskeleton</location>
        <location evidence="1">Flagellum axoneme</location>
    </subcellularLocation>
</comment>
<comment type="alternative products">
    <event type="alternative splicing"/>
    <isoform>
        <id>Q8VHI7-1</id>
        <name>1</name>
        <sequence type="displayed"/>
    </isoform>
    <isoform>
        <id>Q8VHI7-2</id>
        <name>2</name>
        <sequence type="described" ref="VSP_024645"/>
    </isoform>
</comment>
<comment type="similarity">
    <text>Belongs to the DRC2 family.</text>
</comment>
<name>DRC2_MOUSE</name>
<organism>
    <name type="scientific">Mus musculus</name>
    <name type="common">Mouse</name>
    <dbReference type="NCBI Taxonomy" id="10090"/>
    <lineage>
        <taxon>Eukaryota</taxon>
        <taxon>Metazoa</taxon>
        <taxon>Chordata</taxon>
        <taxon>Craniata</taxon>
        <taxon>Vertebrata</taxon>
        <taxon>Euteleostomi</taxon>
        <taxon>Mammalia</taxon>
        <taxon>Eutheria</taxon>
        <taxon>Euarchontoglires</taxon>
        <taxon>Glires</taxon>
        <taxon>Rodentia</taxon>
        <taxon>Myomorpha</taxon>
        <taxon>Muroidea</taxon>
        <taxon>Muridae</taxon>
        <taxon>Murinae</taxon>
        <taxon>Mus</taxon>
        <taxon>Mus</taxon>
    </lineage>
</organism>
<gene>
    <name type="primary">Ccdc65</name>
    <name evidence="2" type="synonym">Drc2</name>
</gene>
<sequence>MSKKGKKPKLPKAPLSEEDQLLIFQQKMLADEEAAKKKERLLTQFLKDKLAKEEHNSALNLNKINTQWRTILREVKTRELHQDIEILSQTFERVVDCKDSVIKSLAKDLTEAEEQYAHALRSHLHNIDQLLTLQRRRLGLLEENYNMELEVLTKEFETERKLIIDHHEKEMHYLQDVFMAMEQNYIDSEYESKLEFQSMWDDLKNKNLEEKHFLRLQLENIVEDLWRRFQDALKNYTDATEDRKIAFEYLKVKDEKSSKEIETQMKKIQKLQETIGILKGKIVAHSREGEWQNQCIRNNKELVHVQLRKLKVQRTQARTLSQENLVKLTLESNATLKALKKVVEKGEKILKLAEICRKFETEEEKVLPFYSSVLTPEEQEEAKLQNPEDITEDLAKIMMDYAGMENFWKRYNKVKLEVLSLQHRRLQLLDISSKLREMLKQYLDGISVSDEVLSHLNPLFVVNHRSNLPQLPPPSAQPVYNVIEAAHIASHIL</sequence>
<feature type="chain" id="PRO_0000284780" description="Dynein regulatory complex subunit 2">
    <location>
        <begin position="1"/>
        <end position="493"/>
    </location>
</feature>
<feature type="coiled-coil region" evidence="3">
    <location>
        <begin position="99"/>
        <end position="163"/>
    </location>
</feature>
<feature type="coiled-coil region" evidence="3">
    <location>
        <begin position="253"/>
        <end position="280"/>
    </location>
</feature>
<feature type="splice variant" id="VSP_024645" description="In isoform 2." evidence="4">
    <location>
        <begin position="105"/>
        <end position="493"/>
    </location>
</feature>
<feature type="sequence conflict" description="In Ref. 2; AAH56947/AAH60155." evidence="5" ref="2">
    <original>S</original>
    <variation>V</variation>
    <location>
        <position position="104"/>
    </location>
</feature>
<protein>
    <recommendedName>
        <fullName evidence="2">Dynein regulatory complex subunit 2</fullName>
    </recommendedName>
    <alternativeName>
        <fullName>Coiled-coil domain-containing protein 65</fullName>
    </alternativeName>
    <alternativeName>
        <fullName>Testis development protein NYD-SP28</fullName>
    </alternativeName>
</protein>
<dbReference type="EMBL" id="AF454432">
    <property type="protein sequence ID" value="AAL51007.1"/>
    <property type="molecule type" value="mRNA"/>
</dbReference>
<dbReference type="EMBL" id="AK077174">
    <property type="protein sequence ID" value="BAC36661.1"/>
    <property type="molecule type" value="mRNA"/>
</dbReference>
<dbReference type="EMBL" id="BC048073">
    <property type="protein sequence ID" value="AAH48073.1"/>
    <property type="molecule type" value="mRNA"/>
</dbReference>
<dbReference type="EMBL" id="BC056947">
    <property type="protein sequence ID" value="AAH56947.1"/>
    <property type="molecule type" value="mRNA"/>
</dbReference>
<dbReference type="EMBL" id="BC060155">
    <property type="protein sequence ID" value="AAH60155.1"/>
    <property type="molecule type" value="mRNA"/>
</dbReference>
<dbReference type="CCDS" id="CCDS27802.1">
    <molecule id="Q8VHI7-1"/>
</dbReference>
<dbReference type="RefSeq" id="NP_705738.1">
    <molecule id="Q8VHI7-1"/>
    <property type="nucleotide sequence ID" value="NM_153518.2"/>
</dbReference>
<dbReference type="SMR" id="Q8VHI7"/>
<dbReference type="BioGRID" id="222929">
    <property type="interactions" value="1"/>
</dbReference>
<dbReference type="FunCoup" id="Q8VHI7">
    <property type="interactions" value="130"/>
</dbReference>
<dbReference type="STRING" id="10090.ENSMUSP00000003444"/>
<dbReference type="PhosphoSitePlus" id="Q8VHI7"/>
<dbReference type="SwissPalm" id="Q8VHI7"/>
<dbReference type="PaxDb" id="10090-ENSMUSP00000003444"/>
<dbReference type="ProteomicsDB" id="265713">
    <molecule id="Q8VHI7-1"/>
</dbReference>
<dbReference type="ProteomicsDB" id="265714">
    <molecule id="Q8VHI7-2"/>
</dbReference>
<dbReference type="Antibodypedia" id="48594">
    <property type="antibodies" value="52 antibodies from 12 providers"/>
</dbReference>
<dbReference type="DNASU" id="105833"/>
<dbReference type="Ensembl" id="ENSMUST00000003444.6">
    <molecule id="Q8VHI7-1"/>
    <property type="protein sequence ID" value="ENSMUSP00000003444.5"/>
    <property type="gene ID" value="ENSMUSG00000003354.7"/>
</dbReference>
<dbReference type="GeneID" id="105833"/>
<dbReference type="KEGG" id="mmu:105833"/>
<dbReference type="UCSC" id="uc007xnk.1">
    <molecule id="Q8VHI7-2"/>
    <property type="organism name" value="mouse"/>
</dbReference>
<dbReference type="UCSC" id="uc007xnl.1">
    <molecule id="Q8VHI7-1"/>
    <property type="organism name" value="mouse"/>
</dbReference>
<dbReference type="AGR" id="MGI:2146001"/>
<dbReference type="CTD" id="85478"/>
<dbReference type="MGI" id="MGI:2146001">
    <property type="gene designation" value="Ccdc65"/>
</dbReference>
<dbReference type="VEuPathDB" id="HostDB:ENSMUSG00000003354"/>
<dbReference type="eggNOG" id="ENOG502QQDD">
    <property type="taxonomic scope" value="Eukaryota"/>
</dbReference>
<dbReference type="GeneTree" id="ENSGT00940000153804"/>
<dbReference type="HOGENOM" id="CLU_026536_1_0_1"/>
<dbReference type="InParanoid" id="Q8VHI7"/>
<dbReference type="OMA" id="WEYLDLF"/>
<dbReference type="OrthoDB" id="7760980at2759"/>
<dbReference type="PhylomeDB" id="Q8VHI7"/>
<dbReference type="TreeFam" id="TF326074"/>
<dbReference type="BioGRID-ORCS" id="105833">
    <property type="hits" value="0 hits in 76 CRISPR screens"/>
</dbReference>
<dbReference type="ChiTaRS" id="Ccdc65">
    <property type="organism name" value="mouse"/>
</dbReference>
<dbReference type="PRO" id="PR:Q8VHI7"/>
<dbReference type="Proteomes" id="UP000000589">
    <property type="component" value="Chromosome 15"/>
</dbReference>
<dbReference type="RNAct" id="Q8VHI7">
    <property type="molecule type" value="protein"/>
</dbReference>
<dbReference type="Bgee" id="ENSMUSG00000003354">
    <property type="expression patterns" value="Expressed in spermatid and 69 other cell types or tissues"/>
</dbReference>
<dbReference type="ExpressionAtlas" id="Q8VHI7">
    <property type="expression patterns" value="baseline and differential"/>
</dbReference>
<dbReference type="GO" id="GO:0005858">
    <property type="term" value="C:axonemal dynein complex"/>
    <property type="evidence" value="ECO:0007669"/>
    <property type="project" value="InterPro"/>
</dbReference>
<dbReference type="GO" id="GO:0036064">
    <property type="term" value="C:ciliary basal body"/>
    <property type="evidence" value="ECO:0007669"/>
    <property type="project" value="Ensembl"/>
</dbReference>
<dbReference type="GO" id="GO:0031514">
    <property type="term" value="C:motile cilium"/>
    <property type="evidence" value="ECO:0007669"/>
    <property type="project" value="UniProtKB-SubCell"/>
</dbReference>
<dbReference type="GO" id="GO:0070286">
    <property type="term" value="P:axonemal dynein complex assembly"/>
    <property type="evidence" value="ECO:0007669"/>
    <property type="project" value="InterPro"/>
</dbReference>
<dbReference type="GO" id="GO:0003352">
    <property type="term" value="P:regulation of cilium movement"/>
    <property type="evidence" value="ECO:0007669"/>
    <property type="project" value="Ensembl"/>
</dbReference>
<dbReference type="InterPro" id="IPR039505">
    <property type="entry name" value="DRC1/2_N"/>
</dbReference>
<dbReference type="InterPro" id="IPR039750">
    <property type="entry name" value="DRC1/DRC2"/>
</dbReference>
<dbReference type="PANTHER" id="PTHR21625:SF0">
    <property type="entry name" value="DYNEIN REGULATORY COMPLEX SUBUNIT 2"/>
    <property type="match status" value="1"/>
</dbReference>
<dbReference type="PANTHER" id="PTHR21625">
    <property type="entry name" value="NYD-SP28 PROTEIN"/>
    <property type="match status" value="1"/>
</dbReference>
<dbReference type="Pfam" id="PF14772">
    <property type="entry name" value="NYD-SP28"/>
    <property type="match status" value="1"/>
</dbReference>
<keyword id="KW-0025">Alternative splicing</keyword>
<keyword id="KW-0966">Cell projection</keyword>
<keyword id="KW-0969">Cilium</keyword>
<keyword id="KW-0175">Coiled coil</keyword>
<keyword id="KW-0963">Cytoplasm</keyword>
<keyword id="KW-0206">Cytoskeleton</keyword>
<keyword id="KW-0282">Flagellum</keyword>
<keyword id="KW-1185">Reference proteome</keyword>